<feature type="signal peptide" evidence="1">
    <location>
        <begin position="1"/>
        <end position="24"/>
    </location>
</feature>
<feature type="chain" id="PRO_0000022153" description="Fimbrial protein PrsE">
    <location>
        <begin position="25"/>
        <end position="173"/>
    </location>
</feature>
<sequence>MKKIRGLCLPVMLGAVLMSQHVHAADNLTFKGKLIIPACTVQNAEVNWGDIEIQNLVQSGGNQKDFTVDMNCPYSLGTMKVTITSNGQTGNSILVPNTSTASGDGLLIYLYNSNNSGIGNAVTLGSQVTPGKITGTAPARKITLYAKLGYKGNMQSLQAGTFSATATLVASYS</sequence>
<proteinExistence type="inferred from homology"/>
<accession>P42186</accession>
<name>PRSE_ECOLX</name>
<organism>
    <name type="scientific">Escherichia coli</name>
    <dbReference type="NCBI Taxonomy" id="562"/>
    <lineage>
        <taxon>Bacteria</taxon>
        <taxon>Pseudomonadati</taxon>
        <taxon>Pseudomonadota</taxon>
        <taxon>Gammaproteobacteria</taxon>
        <taxon>Enterobacterales</taxon>
        <taxon>Enterobacteriaceae</taxon>
        <taxon>Escherichia</taxon>
    </lineage>
</organism>
<evidence type="ECO:0000255" key="1"/>
<protein>
    <recommendedName>
        <fullName>Fimbrial protein PrsE</fullName>
    </recommendedName>
</protein>
<dbReference type="EMBL" id="X62158">
    <property type="protein sequence ID" value="CAA44087.1"/>
    <property type="molecule type" value="Genomic_DNA"/>
</dbReference>
<dbReference type="PIR" id="S25210">
    <property type="entry name" value="S25210"/>
</dbReference>
<dbReference type="SMR" id="P42186"/>
<dbReference type="GO" id="GO:0005576">
    <property type="term" value="C:extracellular region"/>
    <property type="evidence" value="ECO:0007669"/>
    <property type="project" value="UniProtKB-SubCell"/>
</dbReference>
<dbReference type="GO" id="GO:0009289">
    <property type="term" value="C:pilus"/>
    <property type="evidence" value="ECO:0007669"/>
    <property type="project" value="UniProtKB-SubCell"/>
</dbReference>
<dbReference type="GO" id="GO:0043709">
    <property type="term" value="P:cell adhesion involved in single-species biofilm formation"/>
    <property type="evidence" value="ECO:0007669"/>
    <property type="project" value="TreeGrafter"/>
</dbReference>
<dbReference type="Gene3D" id="2.60.40.1090">
    <property type="entry name" value="Fimbrial-type adhesion domain"/>
    <property type="match status" value="1"/>
</dbReference>
<dbReference type="InterPro" id="IPR000259">
    <property type="entry name" value="Adhesion_dom_fimbrial"/>
</dbReference>
<dbReference type="InterPro" id="IPR036937">
    <property type="entry name" value="Adhesion_dom_fimbrial_sf"/>
</dbReference>
<dbReference type="InterPro" id="IPR008966">
    <property type="entry name" value="Adhesion_dom_sf"/>
</dbReference>
<dbReference type="InterPro" id="IPR050263">
    <property type="entry name" value="Bact_Fimbrial_Adh_Pro"/>
</dbReference>
<dbReference type="InterPro" id="IPR004086">
    <property type="entry name" value="P_pili_tip_fibrillum_PapE"/>
</dbReference>
<dbReference type="PANTHER" id="PTHR33420:SF26">
    <property type="entry name" value="FIMBRIAL SUBUNIT"/>
    <property type="match status" value="1"/>
</dbReference>
<dbReference type="PANTHER" id="PTHR33420">
    <property type="entry name" value="FIMBRIAL SUBUNIT ELFA-RELATED"/>
    <property type="match status" value="1"/>
</dbReference>
<dbReference type="Pfam" id="PF00419">
    <property type="entry name" value="Fimbrial"/>
    <property type="match status" value="1"/>
</dbReference>
<dbReference type="PRINTS" id="PR01555">
    <property type="entry name" value="FIMBRIALPAPE"/>
</dbReference>
<dbReference type="SUPFAM" id="SSF49401">
    <property type="entry name" value="Bacterial adhesins"/>
    <property type="match status" value="1"/>
</dbReference>
<reference key="1">
    <citation type="journal article" date="1992" name="Mol. Microbiol.">
        <title>Horizontal gene transfer of the Escherichia coli pap and prs pili operons as a mechanism for the development of tissue-specific adhesive properties.</title>
        <authorList>
            <person name="Marklund B.-I."/>
            <person name="Tennent J.M."/>
            <person name="Garcia E."/>
            <person name="Hamers A."/>
            <person name="Baga M."/>
            <person name="Lindberg F."/>
            <person name="Gaastra W."/>
            <person name="Normark S."/>
        </authorList>
    </citation>
    <scope>NUCLEOTIDE SEQUENCE [GENOMIC DNA]</scope>
    <source>
        <strain>1442</strain>
    </source>
</reference>
<keyword id="KW-0130">Cell adhesion</keyword>
<keyword id="KW-0281">Fimbrium</keyword>
<keyword id="KW-0964">Secreted</keyword>
<keyword id="KW-0732">Signal</keyword>
<gene>
    <name type="primary">prsE</name>
</gene>
<comment type="function">
    <text>Fimbriae (also called pili), polar filaments radiating from the surface of the bacterium to a length of 0.5-1.5 micrometers and numbering 100-300 per cell, enable bacteria to colonize the epithelium of specific host organs.</text>
</comment>
<comment type="subcellular location">
    <subcellularLocation>
        <location>Secreted</location>
    </subcellularLocation>
    <subcellularLocation>
        <location>Fimbrium</location>
    </subcellularLocation>
    <text>At the tip of the pili.</text>
</comment>